<proteinExistence type="evidence at protein level"/>
<keyword id="KW-0002">3D-structure</keyword>
<keyword id="KW-0031">Aminopeptidase</keyword>
<keyword id="KW-0963">Cytoplasm</keyword>
<keyword id="KW-0378">Hydrolase</keyword>
<keyword id="KW-0464">Manganese</keyword>
<keyword id="KW-0479">Metal-binding</keyword>
<keyword id="KW-0645">Protease</keyword>
<keyword id="KW-1185">Reference proteome</keyword>
<keyword id="KW-0732">Signal</keyword>
<keyword id="KW-0926">Vacuole</keyword>
<name>AMPP_PLAF7</name>
<dbReference type="EC" id="3.4.11.9" evidence="3 4 5"/>
<dbReference type="EMBL" id="LN999946">
    <property type="protein sequence ID" value="CZU00239.1"/>
    <property type="molecule type" value="Genomic_DNA"/>
</dbReference>
<dbReference type="RefSeq" id="XP_001348691.1">
    <property type="nucleotide sequence ID" value="XM_001348655.1"/>
</dbReference>
<dbReference type="PDB" id="5JQK">
    <property type="method" value="X-ray"/>
    <property type="resolution" value="2.35 A"/>
    <property type="chains" value="A/B=129-775"/>
</dbReference>
<dbReference type="PDB" id="5JR6">
    <property type="method" value="X-ray"/>
    <property type="resolution" value="2.30 A"/>
    <property type="chains" value="A/B=129-775"/>
</dbReference>
<dbReference type="PDBsum" id="5JQK"/>
<dbReference type="PDBsum" id="5JR6"/>
<dbReference type="SMR" id="A0A144A2H0"/>
<dbReference type="FunCoup" id="A0A144A2H0">
    <property type="interactions" value="38"/>
</dbReference>
<dbReference type="STRING" id="36329.A0A144A2H0"/>
<dbReference type="PaxDb" id="5833-PF14_0517"/>
<dbReference type="EnsemblProtists" id="CZU00239">
    <property type="protein sequence ID" value="CZU00239"/>
    <property type="gene ID" value="PF3D7_1454400"/>
</dbReference>
<dbReference type="GeneID" id="812099"/>
<dbReference type="KEGG" id="pfa:PF3D7_1454400"/>
<dbReference type="VEuPathDB" id="PlasmoDB:PF3D7_1454400"/>
<dbReference type="InParanoid" id="A0A144A2H0"/>
<dbReference type="OrthoDB" id="9995434at2759"/>
<dbReference type="PhylomeDB" id="A0A144A2H0"/>
<dbReference type="BRENDA" id="3.4.11.9">
    <property type="organism ID" value="4889"/>
</dbReference>
<dbReference type="Proteomes" id="UP000001450">
    <property type="component" value="Chromosome 14"/>
</dbReference>
<dbReference type="GO" id="GO:0005737">
    <property type="term" value="C:cytoplasm"/>
    <property type="evidence" value="ECO:0000314"/>
    <property type="project" value="UniProtKB"/>
</dbReference>
<dbReference type="GO" id="GO:0020020">
    <property type="term" value="C:food vacuole"/>
    <property type="evidence" value="ECO:0000314"/>
    <property type="project" value="UniProtKB"/>
</dbReference>
<dbReference type="GO" id="GO:0005775">
    <property type="term" value="C:vacuolar lumen"/>
    <property type="evidence" value="ECO:0007669"/>
    <property type="project" value="UniProtKB-SubCell"/>
</dbReference>
<dbReference type="GO" id="GO:0030145">
    <property type="term" value="F:manganese ion binding"/>
    <property type="evidence" value="ECO:0000314"/>
    <property type="project" value="UniProtKB"/>
</dbReference>
<dbReference type="GO" id="GO:0070006">
    <property type="term" value="F:metalloaminopeptidase activity"/>
    <property type="evidence" value="ECO:0000314"/>
    <property type="project" value="UniProtKB"/>
</dbReference>
<dbReference type="GO" id="GO:0042540">
    <property type="term" value="P:hemoglobin catabolic process"/>
    <property type="evidence" value="ECO:0000314"/>
    <property type="project" value="UniProtKB"/>
</dbReference>
<dbReference type="GO" id="GO:0006508">
    <property type="term" value="P:proteolysis"/>
    <property type="evidence" value="ECO:0000314"/>
    <property type="project" value="UniProtKB"/>
</dbReference>
<dbReference type="CDD" id="cd01085">
    <property type="entry name" value="APP"/>
    <property type="match status" value="1"/>
</dbReference>
<dbReference type="FunFam" id="3.90.230.10:FF:000009">
    <property type="entry name" value="xaa-Pro aminopeptidase 2"/>
    <property type="match status" value="1"/>
</dbReference>
<dbReference type="Gene3D" id="3.90.230.10">
    <property type="entry name" value="Creatinase/methionine aminopeptidase superfamily"/>
    <property type="match status" value="1"/>
</dbReference>
<dbReference type="Gene3D" id="3.40.350.10">
    <property type="entry name" value="Creatinase/prolidase N-terminal domain"/>
    <property type="match status" value="2"/>
</dbReference>
<dbReference type="InterPro" id="IPR029149">
    <property type="entry name" value="Creatin/AminoP/Spt16_N"/>
</dbReference>
<dbReference type="InterPro" id="IPR036005">
    <property type="entry name" value="Creatinase/aminopeptidase-like"/>
</dbReference>
<dbReference type="InterPro" id="IPR000587">
    <property type="entry name" value="Creatinase_N"/>
</dbReference>
<dbReference type="InterPro" id="IPR000994">
    <property type="entry name" value="Pept_M24"/>
</dbReference>
<dbReference type="InterPro" id="IPR033740">
    <property type="entry name" value="Pept_M24B"/>
</dbReference>
<dbReference type="InterPro" id="IPR032416">
    <property type="entry name" value="Peptidase_M24_C"/>
</dbReference>
<dbReference type="InterPro" id="IPR001131">
    <property type="entry name" value="Peptidase_M24B_aminopep-P_CS"/>
</dbReference>
<dbReference type="InterPro" id="IPR050422">
    <property type="entry name" value="X-Pro_aminopeptidase_P"/>
</dbReference>
<dbReference type="PANTHER" id="PTHR43763">
    <property type="entry name" value="XAA-PRO AMINOPEPTIDASE 1"/>
    <property type="match status" value="1"/>
</dbReference>
<dbReference type="PANTHER" id="PTHR43763:SF6">
    <property type="entry name" value="XAA-PRO AMINOPEPTIDASE 1"/>
    <property type="match status" value="1"/>
</dbReference>
<dbReference type="Pfam" id="PF01321">
    <property type="entry name" value="Creatinase_N"/>
    <property type="match status" value="1"/>
</dbReference>
<dbReference type="Pfam" id="PF16189">
    <property type="entry name" value="Creatinase_N_2"/>
    <property type="match status" value="1"/>
</dbReference>
<dbReference type="Pfam" id="PF00557">
    <property type="entry name" value="Peptidase_M24"/>
    <property type="match status" value="1"/>
</dbReference>
<dbReference type="Pfam" id="PF16188">
    <property type="entry name" value="Peptidase_M24_C"/>
    <property type="match status" value="1"/>
</dbReference>
<dbReference type="SUPFAM" id="SSF55920">
    <property type="entry name" value="Creatinase/aminopeptidase"/>
    <property type="match status" value="1"/>
</dbReference>
<dbReference type="SUPFAM" id="SSF53092">
    <property type="entry name" value="Creatinase/prolidase N-terminal domain"/>
    <property type="match status" value="1"/>
</dbReference>
<dbReference type="PROSITE" id="PS00491">
    <property type="entry name" value="PROLINE_PEPTIDASE"/>
    <property type="match status" value="1"/>
</dbReference>
<organism evidence="11">
    <name type="scientific">Plasmodium falciparum (isolate 3D7)</name>
    <dbReference type="NCBI Taxonomy" id="36329"/>
    <lineage>
        <taxon>Eukaryota</taxon>
        <taxon>Sar</taxon>
        <taxon>Alveolata</taxon>
        <taxon>Apicomplexa</taxon>
        <taxon>Aconoidasida</taxon>
        <taxon>Haemosporida</taxon>
        <taxon>Plasmodiidae</taxon>
        <taxon>Plasmodium</taxon>
        <taxon>Plasmodium (Laverania)</taxon>
    </lineage>
</organism>
<accession>A0A144A2H0</accession>
<protein>
    <recommendedName>
        <fullName evidence="6">Aminopeptidase P</fullName>
        <shortName evidence="6">PfAPP</shortName>
        <ecNumber evidence="3 4 5">3.4.11.9</ecNumber>
    </recommendedName>
    <alternativeName>
        <fullName evidence="7">Xaa-Pro aminopeptidase</fullName>
    </alternativeName>
</protein>
<gene>
    <name evidence="6" type="primary">APP</name>
    <name type="ORF">PF14_0517</name>
    <name evidence="10" type="ORF">PF3D7_1454400</name>
</gene>
<comment type="function">
    <text evidence="3 4 5 8">Catalyzes the removal of a penultimate prolyl residue from the N-termini of peptides (PubMed:17895246, PubMed:19574214, PubMed:27462122). In the food vacuole, involved in the final step of host hemoglobin catabolism, by cleaving hemoglobin-derived oligopeptides (PubMed:17895246, PubMed:19574214). In the cytoplasm, may be involved in the last steps of the turnover of ubiquitinated proteins (Probable).</text>
</comment>
<comment type="catalytic activity">
    <reaction evidence="3 4 5">
        <text>Release of any N-terminal amino acid, including proline, that is linked to proline, even from a dipeptide or tripeptide.</text>
        <dbReference type="EC" id="3.4.11.9"/>
    </reaction>
</comment>
<comment type="cofactor">
    <cofactor evidence="4">
        <name>Mn(2+)</name>
        <dbReference type="ChEBI" id="CHEBI:29035"/>
    </cofactor>
    <text evidence="5">Binds 2 Mn(2+) ions per subunit.</text>
</comment>
<comment type="activity regulation">
    <text evidence="4 5">Partially activated by Co(2+) and Mg(2+) has no effect (PubMed:19574214). Inhibited by 1 mM Zn(2+), Ni(2+), or Cu(2+) (PubMed:19574214). Inhibited by apstatin, a non-hydrolysable peptide analog (PubMed:27462122).</text>
</comment>
<comment type="biophysicochemical properties">
    <kinetics>
        <KM evidence="4">0.51 mM for human hemoglobin peptide HbPep1 (FPHFD) (at pH 7.5 and 37 degrees Celsius)</KM>
        <KM evidence="4">0.86 mM for human hemoglobin peptide HbPep1 (FPHFD) (at pH 5.5 and 37 degrees Celsius)</KM>
        <KM evidence="4">1.4 mM for human hemoglobin peptide HbPep2 (YPWTQ) (at pH 7.5 and 37 degrees Celsius)</KM>
        <KM evidence="4">1.8 mM for human hemoglobin peptide HbPep2 (YPWTQ) (at pH 5.5 and 37 degrees Celsius)</KM>
        <text evidence="4">kcat is 8.6 sec(-1) with for human hemoglobin peptide HbPep1 (FPHFD) as substrate (at pH 7.5 and 37 degrees Celsius) (PubMed:19574214). kcat is 5.4 sec(-1) with for human hemoglobin peptide HbPep1 (FPHFD) as substrate (at pH 5.5 and 37 degrees Celsius) (PubMed:19574214). kcat is 1500 sec(-1) with for human hemoglobin peptide HbPep2 (YPWTQ) as substrate (at pH 7.5 and 37 degrees Celsius) (PubMed:19574214). kcat is 12 sec(-1) with for human hemoglobin peptide HbPep2 (YPWTQ) as substrate (at pH 5.5 and 37 degrees Celsius) (PubMed:19574214).</text>
    </kinetics>
    <phDependence>
        <text evidence="4">Optimum pH is 7.5 (PubMed:19574214). Active at pH 5.5-7.5 (PubMed:19574214).</text>
    </phDependence>
</comment>
<comment type="subunit">
    <text evidence="4">Homodimer.</text>
</comment>
<comment type="subcellular location">
    <subcellularLocation>
        <location evidence="3 4">Vacuole lumen</location>
    </subcellularLocation>
    <subcellularLocation>
        <location evidence="3 4">Cytoplasm</location>
    </subcellularLocation>
    <text evidence="3 4">Localizes to the digestive (or food) vacuole, an acidic vacuole where host hemoglobin is digested.</text>
</comment>
<comment type="developmental stage">
    <text evidence="3 4">Expressed during the asexual blood stage including in rings, trophozoites and schizonts (at protein level).</text>
</comment>
<comment type="PTM">
    <text evidence="4">The N-terminus may be proteolytically cleaved to generate a 73-kDa mature form.</text>
</comment>
<comment type="similarity">
    <text evidence="2">Belongs to the peptidase M24B family.</text>
</comment>
<evidence type="ECO:0000255" key="1"/>
<evidence type="ECO:0000255" key="2">
    <source>
        <dbReference type="RuleBase" id="RU000590"/>
    </source>
</evidence>
<evidence type="ECO:0000269" key="3">
    <source>
    </source>
</evidence>
<evidence type="ECO:0000269" key="4">
    <source>
    </source>
</evidence>
<evidence type="ECO:0000269" key="5">
    <source>
    </source>
</evidence>
<evidence type="ECO:0000303" key="6">
    <source>
    </source>
</evidence>
<evidence type="ECO:0000305" key="7"/>
<evidence type="ECO:0000305" key="8">
    <source>
    </source>
</evidence>
<evidence type="ECO:0000305" key="9">
    <source>
    </source>
</evidence>
<evidence type="ECO:0000312" key="10">
    <source>
        <dbReference type="EMBL" id="CZU00239.1"/>
    </source>
</evidence>
<evidence type="ECO:0000312" key="11">
    <source>
        <dbReference type="Proteomes" id="UP000001450"/>
    </source>
</evidence>
<evidence type="ECO:0007744" key="12">
    <source>
        <dbReference type="PDB" id="5JQK"/>
    </source>
</evidence>
<evidence type="ECO:0007744" key="13">
    <source>
        <dbReference type="PDB" id="5JR6"/>
    </source>
</evidence>
<evidence type="ECO:0007829" key="14">
    <source>
        <dbReference type="PDB" id="5JQK"/>
    </source>
</evidence>
<evidence type="ECO:0007829" key="15">
    <source>
        <dbReference type="PDB" id="5JR6"/>
    </source>
</evidence>
<sequence>MQLNFLLFVFIFLMVFHLNIFNKGKRQNLVSAYLNHFKKSYFSGVTSGSDCVNKSEVSSDNNNNNNNNNNKIAHNFFSKKYQRNFENNNLSENQENNKNIIYSGSNIFKNIYNTEMMSNNNTVDVNMMDNNPAARLEELRTIMKKNKIDVYILINSDEHNSEIINEKDKKIVKITNYSGADGILIVTKDKPILYVNALYELQAMNELDQNLFTLRISRIDNRDEIFETISSLEFNTIAFDGKNTSVVFYEKLRKALLNAYPKKKIVEKIIYNNNFDDVNKKDDENVLNFLVLEKSLVEIKDYPVNNKTLYIHDRKYNGACAGEKIDKLKQSLMYDIKNVDNLLLSELDEIAYLLNLRGYDYQYSPLFYSYLLFQFDREEQDFSKIVFFTTVKNLPADVKNLLEINKVIVKEYEEIVPYLRDVVIPSIPKHNDDNPDFKKYDISLSPYINLMIYKLFDRKNVLLQNSPVVKMKAVKNDVEIDNMKQAHILDGLALLQFFHWCEQKRKTKELFNETEMSLRHKVDYFRSTKKNFIFPSFSTISASGPNAAVIHYECTDKTNATIKPAIYLLDSGGQYLHGTTDVTRTTHFGEPTAEEKRIYTLVLKGHLRLRKVIFASYTNSSALDFIARENLFNNFMDYNHGTGHGVGLTLNVHEGGCSIGPVGGAPLKKNMVLSNEPGYYMKDKFGVRIENMQYVISKEITDTTEYLSFDDLTMYPYEKKLLDFSLLTNQEIKELNEYHTTIRNTLLPLVKQSPQEYGESVEKYLIEITEPIAIHNN</sequence>
<reference evidence="11" key="1">
    <citation type="journal article" date="2002" name="Nature">
        <title>Genome sequence of the human malaria parasite Plasmodium falciparum.</title>
        <authorList>
            <person name="Gardner M.J."/>
            <person name="Hall N."/>
            <person name="Fung E."/>
            <person name="White O."/>
            <person name="Berriman M."/>
            <person name="Hyman R.W."/>
            <person name="Carlton J.M."/>
            <person name="Pain A."/>
            <person name="Nelson K.E."/>
            <person name="Bowman S."/>
            <person name="Paulsen I.T."/>
            <person name="James K.D."/>
            <person name="Eisen J.A."/>
            <person name="Rutherford K.M."/>
            <person name="Salzberg S.L."/>
            <person name="Craig A."/>
            <person name="Kyes S."/>
            <person name="Chan M.-S."/>
            <person name="Nene V."/>
            <person name="Shallom S.J."/>
            <person name="Suh B."/>
            <person name="Peterson J."/>
            <person name="Angiuoli S."/>
            <person name="Pertea M."/>
            <person name="Allen J."/>
            <person name="Selengut J."/>
            <person name="Haft D."/>
            <person name="Mather M.W."/>
            <person name="Vaidya A.B."/>
            <person name="Martin D.M.A."/>
            <person name="Fairlamb A.H."/>
            <person name="Fraunholz M.J."/>
            <person name="Roos D.S."/>
            <person name="Ralph S.A."/>
            <person name="McFadden G.I."/>
            <person name="Cummings L.M."/>
            <person name="Subramanian G.M."/>
            <person name="Mungall C."/>
            <person name="Venter J.C."/>
            <person name="Carucci D.J."/>
            <person name="Hoffman S.L."/>
            <person name="Newbold C."/>
            <person name="Davis R.W."/>
            <person name="Fraser C.M."/>
            <person name="Barrell B.G."/>
        </authorList>
    </citation>
    <scope>NUCLEOTIDE SEQUENCE [LARGE SCALE GENOMIC DNA]</scope>
    <source>
        <strain evidence="11">3D7</strain>
    </source>
</reference>
<reference evidence="7" key="2">
    <citation type="journal article" date="2007" name="J. Biol. Chem.">
        <title>Roles for two aminopeptidases in vacuolar hemoglobin catabolism in Plasmodium falciparum.</title>
        <authorList>
            <person name="Dalal S."/>
            <person name="Klemba M."/>
        </authorList>
    </citation>
    <scope>FUNCTION</scope>
    <scope>CATALYTIC ACTIVITY</scope>
    <scope>SUBCELLULAR LOCATION</scope>
    <scope>DEVELOPMENTAL STAGE</scope>
</reference>
<reference evidence="7" key="3">
    <citation type="journal article" date="2009" name="J. Biol. Chem.">
        <title>Evidence for catalytic roles for Plasmodium falciparum aminopeptidase P in the food vacuole and cytosol.</title>
        <authorList>
            <person name="Ragheb D."/>
            <person name="Bompiani K."/>
            <person name="Dalal S."/>
            <person name="Klemba M."/>
        </authorList>
    </citation>
    <scope>FUNCTION</scope>
    <scope>CATALYTIC ACTIVITY</scope>
    <scope>COFACTOR</scope>
    <scope>ACTIVITY REGULATION</scope>
    <scope>BIOPHYSICOCHEMICAL PROPERTIES</scope>
    <scope>SUBUNIT</scope>
    <scope>SUBCELLULAR LOCATION</scope>
    <scope>DEVELOPMENTAL STAGE</scope>
    <scope>PROTEOLYTIC CLEAVAGE</scope>
</reference>
<reference evidence="12 13" key="4">
    <citation type="journal article" date="2016" name="Biochem. J.">
        <title>Structure and substrate fingerprint of aminopeptidase P from Plasmodium falciparum.</title>
        <authorList>
            <person name="Drinkwater N."/>
            <person name="Sivaraman K.K."/>
            <person name="Bamert R.S."/>
            <person name="Rut W."/>
            <person name="Mohamed K."/>
            <person name="Vinh N.B."/>
            <person name="Scammells P.J."/>
            <person name="Drag M."/>
            <person name="McGowan S."/>
        </authorList>
    </citation>
    <scope>X-RAY CRYSTALLOGRAPHY (2.30 ANGSTROMS) OF 108-764 IN COMPLEX WITH MANGANESE AND INHIBITOR</scope>
    <scope>FUNCTION</scope>
    <scope>CATALYTIC ACTIVITY</scope>
    <scope>COFACTOR</scope>
    <scope>ACTIVITY REGULATION</scope>
</reference>
<feature type="signal peptide" evidence="1">
    <location>
        <begin position="1"/>
        <end position="17"/>
    </location>
</feature>
<feature type="propeptide" id="PRO_0000457772" evidence="8">
    <location>
        <begin position="18"/>
        <end status="unknown"/>
    </location>
</feature>
<feature type="chain" id="PRO_5007516016" description="Aminopeptidase P" evidence="1">
    <location>
        <begin status="unknown"/>
        <end position="777"/>
    </location>
</feature>
<feature type="binding site" evidence="9 13">
    <location>
        <position position="551"/>
    </location>
    <ligand>
        <name>substrate</name>
    </ligand>
</feature>
<feature type="binding site" evidence="5 12 13">
    <location>
        <position position="570"/>
    </location>
    <ligand>
        <name>Mn(2+)</name>
        <dbReference type="ChEBI" id="CHEBI:29035"/>
        <label>2</label>
    </ligand>
</feature>
<feature type="binding site" evidence="5 12 13">
    <location>
        <position position="581"/>
    </location>
    <ligand>
        <name>Mn(2+)</name>
        <dbReference type="ChEBI" id="CHEBI:29035"/>
        <label>1</label>
    </ligand>
</feature>
<feature type="binding site" evidence="5 12 13">
    <location>
        <position position="581"/>
    </location>
    <ligand>
        <name>Mn(2+)</name>
        <dbReference type="ChEBI" id="CHEBI:29035"/>
        <label>2</label>
    </ligand>
</feature>
<feature type="binding site" evidence="9 13">
    <location>
        <position position="640"/>
    </location>
    <ligand>
        <name>substrate</name>
    </ligand>
</feature>
<feature type="binding site" evidence="5 12 13">
    <location>
        <position position="644"/>
    </location>
    <ligand>
        <name>Mn(2+)</name>
        <dbReference type="ChEBI" id="CHEBI:29035"/>
        <label>1</label>
    </ligand>
</feature>
<feature type="binding site" evidence="9 13">
    <location>
        <position position="653"/>
    </location>
    <ligand>
        <name>substrate</name>
    </ligand>
</feature>
<feature type="binding site" evidence="5 12 13">
    <location>
        <position position="676"/>
    </location>
    <ligand>
        <name>Mn(2+)</name>
        <dbReference type="ChEBI" id="CHEBI:29035"/>
        <label>1</label>
    </ligand>
</feature>
<feature type="binding site" evidence="5 12 13">
    <location>
        <position position="690"/>
    </location>
    <ligand>
        <name>Mn(2+)</name>
        <dbReference type="ChEBI" id="CHEBI:29035"/>
        <label>1</label>
    </ligand>
</feature>
<feature type="binding site" evidence="5 12 13">
    <location>
        <position position="690"/>
    </location>
    <ligand>
        <name>Mn(2+)</name>
        <dbReference type="ChEBI" id="CHEBI:29035"/>
        <label>2</label>
    </ligand>
</feature>
<feature type="helix" evidence="15">
    <location>
        <begin position="132"/>
        <end position="145"/>
    </location>
</feature>
<feature type="strand" evidence="15">
    <location>
        <begin position="150"/>
        <end position="155"/>
    </location>
</feature>
<feature type="helix" evidence="15">
    <location>
        <begin position="166"/>
        <end position="168"/>
    </location>
</feature>
<feature type="helix" evidence="15">
    <location>
        <begin position="171"/>
        <end position="175"/>
    </location>
</feature>
<feature type="strand" evidence="15">
    <location>
        <begin position="180"/>
        <end position="186"/>
    </location>
</feature>
<feature type="strand" evidence="14">
    <location>
        <begin position="188"/>
        <end position="190"/>
    </location>
</feature>
<feature type="strand" evidence="15">
    <location>
        <begin position="192"/>
        <end position="196"/>
    </location>
</feature>
<feature type="helix" evidence="15">
    <location>
        <begin position="197"/>
        <end position="199"/>
    </location>
</feature>
<feature type="helix" evidence="15">
    <location>
        <begin position="200"/>
        <end position="206"/>
    </location>
</feature>
<feature type="turn" evidence="15">
    <location>
        <begin position="209"/>
        <end position="211"/>
    </location>
</feature>
<feature type="strand" evidence="15">
    <location>
        <begin position="212"/>
        <end position="217"/>
    </location>
</feature>
<feature type="turn" evidence="15">
    <location>
        <begin position="219"/>
        <end position="223"/>
    </location>
</feature>
<feature type="helix" evidence="15">
    <location>
        <begin position="224"/>
        <end position="230"/>
    </location>
</feature>
<feature type="strand" evidence="15">
    <location>
        <begin position="236"/>
        <end position="240"/>
    </location>
</feature>
<feature type="turn" evidence="15">
    <location>
        <begin position="241"/>
        <end position="243"/>
    </location>
</feature>
<feature type="helix" evidence="15">
    <location>
        <begin position="246"/>
        <end position="259"/>
    </location>
</feature>
<feature type="strand" evidence="15">
    <location>
        <begin position="266"/>
        <end position="270"/>
    </location>
</feature>
<feature type="strand" evidence="15">
    <location>
        <begin position="288"/>
        <end position="294"/>
    </location>
</feature>
<feature type="helix" evidence="15">
    <location>
        <begin position="314"/>
        <end position="317"/>
    </location>
</feature>
<feature type="helix" evidence="15">
    <location>
        <begin position="321"/>
        <end position="334"/>
    </location>
</feature>
<feature type="strand" evidence="15">
    <location>
        <begin position="338"/>
        <end position="344"/>
    </location>
</feature>
<feature type="helix" evidence="15">
    <location>
        <begin position="347"/>
        <end position="354"/>
    </location>
</feature>
<feature type="strand" evidence="15">
    <location>
        <begin position="359"/>
        <end position="364"/>
    </location>
</feature>
<feature type="strand" evidence="15">
    <location>
        <begin position="369"/>
        <end position="376"/>
    </location>
</feature>
<feature type="strand" evidence="15">
    <location>
        <begin position="381"/>
        <end position="389"/>
    </location>
</feature>
<feature type="helix" evidence="15">
    <location>
        <begin position="391"/>
        <end position="393"/>
    </location>
</feature>
<feature type="helix" evidence="15">
    <location>
        <begin position="396"/>
        <end position="400"/>
    </location>
</feature>
<feature type="helix" evidence="15">
    <location>
        <begin position="401"/>
        <end position="403"/>
    </location>
</feature>
<feature type="turn" evidence="15">
    <location>
        <begin position="404"/>
        <end position="406"/>
    </location>
</feature>
<feature type="strand" evidence="15">
    <location>
        <begin position="408"/>
        <end position="411"/>
    </location>
</feature>
<feature type="helix" evidence="15">
    <location>
        <begin position="412"/>
        <end position="414"/>
    </location>
</feature>
<feature type="helix" evidence="15">
    <location>
        <begin position="415"/>
        <end position="421"/>
    </location>
</feature>
<feature type="helix" evidence="15">
    <location>
        <begin position="424"/>
        <end position="426"/>
    </location>
</feature>
<feature type="strand" evidence="15">
    <location>
        <begin position="440"/>
        <end position="444"/>
    </location>
</feature>
<feature type="helix" evidence="15">
    <location>
        <begin position="450"/>
        <end position="454"/>
    </location>
</feature>
<feature type="helix" evidence="15">
    <location>
        <begin position="458"/>
        <end position="460"/>
    </location>
</feature>
<feature type="strand" evidence="15">
    <location>
        <begin position="461"/>
        <end position="463"/>
    </location>
</feature>
<feature type="helix" evidence="15">
    <location>
        <begin position="467"/>
        <end position="473"/>
    </location>
</feature>
<feature type="helix" evidence="15">
    <location>
        <begin position="477"/>
        <end position="507"/>
    </location>
</feature>
<feature type="helix" evidence="15">
    <location>
        <begin position="509"/>
        <end position="512"/>
    </location>
</feature>
<feature type="helix" evidence="15">
    <location>
        <begin position="515"/>
        <end position="527"/>
    </location>
</feature>
<feature type="strand" evidence="15">
    <location>
        <begin position="532"/>
        <end position="537"/>
    </location>
</feature>
<feature type="strand" evidence="15">
    <location>
        <begin position="540"/>
        <end position="543"/>
    </location>
</feature>
<feature type="helix" evidence="15">
    <location>
        <begin position="544"/>
        <end position="548"/>
    </location>
</feature>
<feature type="turn" evidence="15">
    <location>
        <begin position="556"/>
        <end position="558"/>
    </location>
</feature>
<feature type="strand" evidence="15">
    <location>
        <begin position="564"/>
        <end position="571"/>
    </location>
</feature>
<feature type="strand" evidence="15">
    <location>
        <begin position="573"/>
        <end position="575"/>
    </location>
</feature>
<feature type="strand" evidence="15">
    <location>
        <begin position="582"/>
        <end position="589"/>
    </location>
</feature>
<feature type="helix" evidence="15">
    <location>
        <begin position="593"/>
        <end position="611"/>
    </location>
</feature>
<feature type="helix" evidence="15">
    <location>
        <begin position="620"/>
        <end position="632"/>
    </location>
</feature>
<feature type="turn" evidence="15">
    <location>
        <begin position="633"/>
        <end position="635"/>
    </location>
</feature>
<feature type="strand" evidence="15">
    <location>
        <begin position="642"/>
        <end position="645"/>
    </location>
</feature>
<feature type="strand" evidence="15">
    <location>
        <begin position="648"/>
        <end position="650"/>
    </location>
</feature>
<feature type="strand" evidence="15">
    <location>
        <begin position="652"/>
        <end position="659"/>
    </location>
</feature>
<feature type="strand" evidence="15">
    <location>
        <begin position="661"/>
        <end position="663"/>
    </location>
</feature>
<feature type="strand" evidence="15">
    <location>
        <begin position="671"/>
        <end position="675"/>
    </location>
</feature>
<feature type="strand" evidence="15">
    <location>
        <begin position="678"/>
        <end position="681"/>
    </location>
</feature>
<feature type="turn" evidence="15">
    <location>
        <begin position="682"/>
        <end position="684"/>
    </location>
</feature>
<feature type="strand" evidence="15">
    <location>
        <begin position="685"/>
        <end position="688"/>
    </location>
</feature>
<feature type="strand" evidence="15">
    <location>
        <begin position="690"/>
        <end position="700"/>
    </location>
</feature>
<feature type="strand" evidence="15">
    <location>
        <begin position="705"/>
        <end position="711"/>
    </location>
</feature>
<feature type="helix" evidence="15">
    <location>
        <begin position="719"/>
        <end position="721"/>
    </location>
</feature>
<feature type="helix" evidence="15">
    <location>
        <begin position="729"/>
        <end position="751"/>
    </location>
</feature>
<feature type="turn" evidence="15">
    <location>
        <begin position="754"/>
        <end position="756"/>
    </location>
</feature>
<feature type="helix" evidence="15">
    <location>
        <begin position="759"/>
        <end position="768"/>
    </location>
</feature>